<proteinExistence type="evidence at protein level"/>
<reference key="1">
    <citation type="journal article" date="2003" name="Eukaryot. Cell">
        <title>Bgs3p, a putative 1,3-beta-glucan synthase subunit, is required for cell wall assembly in Schizosaccharomyces pombe.</title>
        <authorList>
            <person name="Martin V."/>
            <person name="Garcia B."/>
            <person name="Carnero E."/>
            <person name="Duran A."/>
            <person name="Sanchez Y."/>
        </authorList>
    </citation>
    <scope>NUCLEOTIDE SEQUENCE [GENOMIC DNA]</scope>
    <scope>FUNCTION</scope>
    <scope>SUBCELLULAR LOCATION</scope>
</reference>
<reference key="2">
    <citation type="journal article" date="2002" name="Nature">
        <title>The genome sequence of Schizosaccharomyces pombe.</title>
        <authorList>
            <person name="Wood V."/>
            <person name="Gwilliam R."/>
            <person name="Rajandream M.A."/>
            <person name="Lyne M.H."/>
            <person name="Lyne R."/>
            <person name="Stewart A."/>
            <person name="Sgouros J.G."/>
            <person name="Peat N."/>
            <person name="Hayles J."/>
            <person name="Baker S.G."/>
            <person name="Basham D."/>
            <person name="Bowman S."/>
            <person name="Brooks K."/>
            <person name="Brown D."/>
            <person name="Brown S."/>
            <person name="Chillingworth T."/>
            <person name="Churcher C.M."/>
            <person name="Collins M."/>
            <person name="Connor R."/>
            <person name="Cronin A."/>
            <person name="Davis P."/>
            <person name="Feltwell T."/>
            <person name="Fraser A."/>
            <person name="Gentles S."/>
            <person name="Goble A."/>
            <person name="Hamlin N."/>
            <person name="Harris D.E."/>
            <person name="Hidalgo J."/>
            <person name="Hodgson G."/>
            <person name="Holroyd S."/>
            <person name="Hornsby T."/>
            <person name="Howarth S."/>
            <person name="Huckle E.J."/>
            <person name="Hunt S."/>
            <person name="Jagels K."/>
            <person name="James K.D."/>
            <person name="Jones L."/>
            <person name="Jones M."/>
            <person name="Leather S."/>
            <person name="McDonald S."/>
            <person name="McLean J."/>
            <person name="Mooney P."/>
            <person name="Moule S."/>
            <person name="Mungall K.L."/>
            <person name="Murphy L.D."/>
            <person name="Niblett D."/>
            <person name="Odell C."/>
            <person name="Oliver K."/>
            <person name="O'Neil S."/>
            <person name="Pearson D."/>
            <person name="Quail M.A."/>
            <person name="Rabbinowitsch E."/>
            <person name="Rutherford K.M."/>
            <person name="Rutter S."/>
            <person name="Saunders D."/>
            <person name="Seeger K."/>
            <person name="Sharp S."/>
            <person name="Skelton J."/>
            <person name="Simmonds M.N."/>
            <person name="Squares R."/>
            <person name="Squares S."/>
            <person name="Stevens K."/>
            <person name="Taylor K."/>
            <person name="Taylor R.G."/>
            <person name="Tivey A."/>
            <person name="Walsh S.V."/>
            <person name="Warren T."/>
            <person name="Whitehead S."/>
            <person name="Woodward J.R."/>
            <person name="Volckaert G."/>
            <person name="Aert R."/>
            <person name="Robben J."/>
            <person name="Grymonprez B."/>
            <person name="Weltjens I."/>
            <person name="Vanstreels E."/>
            <person name="Rieger M."/>
            <person name="Schaefer M."/>
            <person name="Mueller-Auer S."/>
            <person name="Gabel C."/>
            <person name="Fuchs M."/>
            <person name="Duesterhoeft A."/>
            <person name="Fritzc C."/>
            <person name="Holzer E."/>
            <person name="Moestl D."/>
            <person name="Hilbert H."/>
            <person name="Borzym K."/>
            <person name="Langer I."/>
            <person name="Beck A."/>
            <person name="Lehrach H."/>
            <person name="Reinhardt R."/>
            <person name="Pohl T.M."/>
            <person name="Eger P."/>
            <person name="Zimmermann W."/>
            <person name="Wedler H."/>
            <person name="Wambutt R."/>
            <person name="Purnelle B."/>
            <person name="Goffeau A."/>
            <person name="Cadieu E."/>
            <person name="Dreano S."/>
            <person name="Gloux S."/>
            <person name="Lelaure V."/>
            <person name="Mottier S."/>
            <person name="Galibert F."/>
            <person name="Aves S.J."/>
            <person name="Xiang Z."/>
            <person name="Hunt C."/>
            <person name="Moore K."/>
            <person name="Hurst S.M."/>
            <person name="Lucas M."/>
            <person name="Rochet M."/>
            <person name="Gaillardin C."/>
            <person name="Tallada V.A."/>
            <person name="Garzon A."/>
            <person name="Thode G."/>
            <person name="Daga R.R."/>
            <person name="Cruzado L."/>
            <person name="Jimenez J."/>
            <person name="Sanchez M."/>
            <person name="del Rey F."/>
            <person name="Benito J."/>
            <person name="Dominguez A."/>
            <person name="Revuelta J.L."/>
            <person name="Moreno S."/>
            <person name="Armstrong J."/>
            <person name="Forsburg S.L."/>
            <person name="Cerutti L."/>
            <person name="Lowe T."/>
            <person name="McCombie W.R."/>
            <person name="Paulsen I."/>
            <person name="Potashkin J."/>
            <person name="Shpakovski G.V."/>
            <person name="Ussery D."/>
            <person name="Barrell B.G."/>
            <person name="Nurse P."/>
        </authorList>
    </citation>
    <scope>NUCLEOTIDE SEQUENCE [LARGE SCALE GENOMIC DNA]</scope>
    <source>
        <strain>972 / ATCC 24843</strain>
    </source>
</reference>
<reference key="3">
    <citation type="journal article" date="2000" name="Genes Cells">
        <title>Large-scale screening of intracellular protein localization in living fission yeast cells by the use of a GFP-fusion genomic DNA library.</title>
        <authorList>
            <person name="Ding D.-Q."/>
            <person name="Tomita Y."/>
            <person name="Yamamoto A."/>
            <person name="Chikashige Y."/>
            <person name="Haraguchi T."/>
            <person name="Hiraoka Y."/>
        </authorList>
    </citation>
    <scope>NUCLEOTIDE SEQUENCE [LARGE SCALE GENOMIC DNA] OF 159-339</scope>
    <source>
        <strain>ATCC 38364 / 968</strain>
    </source>
</reference>
<reference key="4">
    <citation type="journal article" date="2008" name="J. Proteome Res.">
        <title>Phosphoproteome analysis of fission yeast.</title>
        <authorList>
            <person name="Wilson-Grady J.T."/>
            <person name="Villen J."/>
            <person name="Gygi S.P."/>
        </authorList>
    </citation>
    <scope>PHOSPHORYLATION [LARGE SCALE ANALYSIS] AT SER-885</scope>
    <scope>IDENTIFICATION BY MASS SPECTROMETRY</scope>
</reference>
<keyword id="KW-0328">Glycosyltransferase</keyword>
<keyword id="KW-0472">Membrane</keyword>
<keyword id="KW-0597">Phosphoprotein</keyword>
<keyword id="KW-1185">Reference proteome</keyword>
<keyword id="KW-0808">Transferase</keyword>
<keyword id="KW-0812">Transmembrane</keyword>
<keyword id="KW-1133">Transmembrane helix</keyword>
<accession>Q9P377</accession>
<accession>Q9UU03</accession>
<gene>
    <name evidence="6" type="primary">bgs3</name>
    <name evidence="8" type="ORF">SPAC19B12.03</name>
</gene>
<feature type="chain" id="PRO_0000121723" description="1,3-beta-glucan synthase component bgs3">
    <location>
        <begin position="1"/>
        <end position="1826"/>
    </location>
</feature>
<feature type="transmembrane region" description="Helical" evidence="2">
    <location>
        <begin position="427"/>
        <end position="447"/>
    </location>
</feature>
<feature type="transmembrane region" description="Helical" evidence="2">
    <location>
        <begin position="465"/>
        <end position="485"/>
    </location>
</feature>
<feature type="transmembrane region" description="Helical" evidence="2">
    <location>
        <begin position="504"/>
        <end position="524"/>
    </location>
</feature>
<feature type="transmembrane region" description="Helical" evidence="2">
    <location>
        <begin position="543"/>
        <end position="563"/>
    </location>
</feature>
<feature type="transmembrane region" description="Helical" evidence="2">
    <location>
        <begin position="597"/>
        <end position="617"/>
    </location>
</feature>
<feature type="transmembrane region" description="Helical" evidence="2">
    <location>
        <begin position="637"/>
        <end position="657"/>
    </location>
</feature>
<feature type="transmembrane region" description="Helical" evidence="2">
    <location>
        <begin position="660"/>
        <end position="680"/>
    </location>
</feature>
<feature type="transmembrane region" description="Helical" evidence="2">
    <location>
        <begin position="1272"/>
        <end position="1292"/>
    </location>
</feature>
<feature type="transmembrane region" description="Helical" evidence="2">
    <location>
        <begin position="1329"/>
        <end position="1349"/>
    </location>
</feature>
<feature type="transmembrane region" description="Helical" evidence="2">
    <location>
        <begin position="1375"/>
        <end position="1397"/>
    </location>
</feature>
<feature type="transmembrane region" description="Helical" evidence="2">
    <location>
        <begin position="1417"/>
        <end position="1437"/>
    </location>
</feature>
<feature type="transmembrane region" description="Helical" evidence="2">
    <location>
        <begin position="1438"/>
        <end position="1458"/>
    </location>
</feature>
<feature type="transmembrane region" description="Helical" evidence="2">
    <location>
        <begin position="1531"/>
        <end position="1551"/>
    </location>
</feature>
<feature type="transmembrane region" description="Helical" evidence="2">
    <location>
        <begin position="1571"/>
        <end position="1591"/>
    </location>
</feature>
<feature type="transmembrane region" description="Helical" evidence="2">
    <location>
        <begin position="1607"/>
        <end position="1627"/>
    </location>
</feature>
<feature type="transmembrane region" description="Helical" evidence="2">
    <location>
        <begin position="1642"/>
        <end position="1662"/>
    </location>
</feature>
<feature type="transmembrane region" description="Helical" evidence="2">
    <location>
        <begin position="1701"/>
        <end position="1721"/>
    </location>
</feature>
<feature type="transmembrane region" description="Helical" evidence="2">
    <location>
        <begin position="1770"/>
        <end position="1790"/>
    </location>
</feature>
<feature type="region of interest" description="Disordered" evidence="3">
    <location>
        <begin position="34"/>
        <end position="90"/>
    </location>
</feature>
<feature type="compositionally biased region" description="Polar residues" evidence="3">
    <location>
        <begin position="34"/>
        <end position="43"/>
    </location>
</feature>
<feature type="compositionally biased region" description="Acidic residues" evidence="3">
    <location>
        <begin position="59"/>
        <end position="75"/>
    </location>
</feature>
<feature type="modified residue" description="Phosphoserine" evidence="5">
    <location>
        <position position="885"/>
    </location>
</feature>
<organism>
    <name type="scientific">Schizosaccharomyces pombe (strain 972 / ATCC 24843)</name>
    <name type="common">Fission yeast</name>
    <dbReference type="NCBI Taxonomy" id="284812"/>
    <lineage>
        <taxon>Eukaryota</taxon>
        <taxon>Fungi</taxon>
        <taxon>Dikarya</taxon>
        <taxon>Ascomycota</taxon>
        <taxon>Taphrinomycotina</taxon>
        <taxon>Schizosaccharomycetes</taxon>
        <taxon>Schizosaccharomycetales</taxon>
        <taxon>Schizosaccharomycetaceae</taxon>
        <taxon>Schizosaccharomyces</taxon>
    </lineage>
</organism>
<evidence type="ECO:0000250" key="1">
    <source>
        <dbReference type="UniProtKB" id="P38631"/>
    </source>
</evidence>
<evidence type="ECO:0000255" key="2"/>
<evidence type="ECO:0000256" key="3">
    <source>
        <dbReference type="SAM" id="MobiDB-lite"/>
    </source>
</evidence>
<evidence type="ECO:0000269" key="4">
    <source>
    </source>
</evidence>
<evidence type="ECO:0000269" key="5">
    <source>
    </source>
</evidence>
<evidence type="ECO:0000303" key="6">
    <source>
    </source>
</evidence>
<evidence type="ECO:0000305" key="7"/>
<evidence type="ECO:0000312" key="8">
    <source>
        <dbReference type="PomBase" id="SPAC19B12.03"/>
    </source>
</evidence>
<protein>
    <recommendedName>
        <fullName evidence="6">1,3-beta-glucan synthase component bgs3</fullName>
        <ecNumber evidence="1">2.4.1.34</ecNumber>
    </recommendedName>
    <alternativeName>
        <fullName>1,3-beta-D-glucan-UDP glucosyltransferase</fullName>
    </alternativeName>
</protein>
<comment type="function">
    <text evidence="1 4">Alternate catalytic subunit of the 1,3-beta-glucan synthase (GS) complex (By similarity). Synthesizes 1,3-beta-glucan, a major structural component of the yeast cell wall (By similarity). Required for cell wall biosynthesis and cell elongation (PubMed:12582133).</text>
</comment>
<comment type="catalytic activity">
    <reaction evidence="1">
        <text>[(1-&gt;3)-beta-D-glucosyl](n) + UDP-alpha-D-glucose = [(1-&gt;3)-beta-D-glucosyl](n+1) + UDP + H(+)</text>
        <dbReference type="Rhea" id="RHEA:21476"/>
        <dbReference type="Rhea" id="RHEA-COMP:11146"/>
        <dbReference type="Rhea" id="RHEA-COMP:14303"/>
        <dbReference type="ChEBI" id="CHEBI:15378"/>
        <dbReference type="ChEBI" id="CHEBI:37671"/>
        <dbReference type="ChEBI" id="CHEBI:58223"/>
        <dbReference type="ChEBI" id="CHEBI:58885"/>
        <dbReference type="EC" id="2.4.1.34"/>
    </reaction>
</comment>
<comment type="subunit">
    <text evidence="1">Component of the 1,3-beta-glucan synthase (GS) complex, composed of at least the alternate catalytic subunits bgs1, bgs2, bgs3, and bgs4, and a regulatory subunit chr4.</text>
</comment>
<comment type="subcellular location">
    <subcellularLocation>
        <location evidence="4">Membrane</location>
        <topology evidence="4">Multi-pass membrane protein</topology>
    </subcellularLocation>
    <text>Found at the growing tips during interphase and at the septum prior to cytokinesis.</text>
</comment>
<comment type="similarity">
    <text evidence="7">Belongs to the glycosyltransferase 48 family.</text>
</comment>
<sequence>MDYKKGEHSPSSSIQILSDDATINSNYAYGEQLQSNDQYNNIQHPAPSFANPFIHEQDDSYSDILEEEPDEDAYDSPERPSSTEEFISQDESNISAGSSFMFPYNRGHPLSKRHDSIMVDEFGHEYIVEGDSIASADEAIDYDALYASWTAETKAPILAIDIENIYIELAMKFGFQWDNMRNMFDYLMVMLDSRASRMTPQEALLTLHADYIGGPQSNFKKWYFACKMDQFDLKSGVLSFISRDPSTQVPYKDMSSCEALWISRMDELSNYERIEQLALYLLCWGEANNVRFMPECLCFIYKVAYDYLISPSFKEQKNPAPKDYFLDNCITPLYNLMHDQQYEIRDQKYVRKEKDHASIIGYDDINQMFWYSKGLKALLLSDGSRIMDADVASRYFLLADIQWQRVCYKSFRESRTWLHFLHNFSRIWILHISVFWYFTVYNSPTIYTPNFHYLEGTQPARAAKWCAPALAGAVASFISFLALILEAYFVPRNNPGAQPVIPRLIFVSILIALNIVPAAFIFGFSNATQQHYRSREIVGYVHFFFSIGCVAYQSFIPLPFLLGPRFKFRSSSRKYLANSYFTNDIASLPWGRTLLSAALWITVFIAKFVESYYFLTLSVRDPIRFLQRMKPYDCYDFMIGASLCSHQPKFLLSLVYLTDLVLFFLDTYLWYMLISTMFSIAYSFYMGSAIWTPWRVIFSNLPRRIYFTLLAYKDLSTEFKPKIYVGQIWNSIMISMYREHLLSLEHLKGLLYQQVGSEYFGKQTFQSPKFFMEAAKGLNKWDAFFRRNSEAERRISFFAQSLGGKIPDAVPVPKMPSFTVLIPHYGEKILLSLREIIREQDPMSRITLLEYLKQLYPNDWDNFVQDTKLMAGDVGVEETKSDVKSEKGKKQGTVKEDLPFYCIGFKSTAPEYTLRTRIWASLRSQTLYRTASGMMNYSRALKLLYRVEQPNLLDDCDGNFERLEHQLEQMAYRKFRLCISMQRYAKFNRDEYENAEFLLRAHPELQIAYLDQDPSEDGEEPKVYATLINGFCPFENGRRLPKYRIRLSGNPILGDGKADNQNMALPFVRGEYLQLIDANQDNYIEECMKIRNVLSEFEEMDCATLTPYTKKGNARHPVAMLGAREYVFSENSGILGDVAAGKEQTFGTLFSRSLALIGGKLHYGHPDFLNTIFMTTRGGVSKAQKGLHVNEDIYAGMTALQRGGRIKHCDYFQCGKGRDLGFGTIINFTTKIGTGMGEQSLSREYFYLGTQLPFFRMLSFYYAHAGFHLNNVFIMISMQLLMLVFVNLGAMYHTVEICDYQAGAAINASLYPPGCYMLKPVLDWIRRCIISIFIVFFISFLPLVVHDLLEKGVIRAVARLCKQIFSLSPMFEVFVTQNYANSIFTNLTYGGARYIATGRGLATTRVPFSVLYSLYTGSSIYLGSRLIMMLLFGTMTVWTTHYVYFWVTMFALVICPFIYNPHQFSFVDFFVDYREFLRWLSRGNTKGHAHSWIGFCRLARTRITGVNRKVKGSPSNKLTMDMPRAGLRNVIFTEVFLPACFAFFTICAYTFMNSQPGLEDKSRAVNGFIRIWIMAALPIAISTAALLILLMFSCMLGPLLRKCSKRYGAVLAALAHAVSVFGLVFTFEALWFLEAWSFSKTVLGCIVIFAIHRLVFKLVVVFLLPREVASGENNYSWWDGHWFGRKGIPYMPIQFIREFMCKVVEMNLFAMDFILSHCILFSLTPILCIPFIDIPHSVLLFWLHPSRQIRPPIYTRKQNQLRRRTFYRYSLLFFALLCTFVAMIVVPLVLDQKLSYQFKFENSVKFFRLMQPSLGVLPNTNKNTSE</sequence>
<name>FKS3_SCHPO</name>
<dbReference type="EC" id="2.4.1.34" evidence="1"/>
<dbReference type="EMBL" id="AJ249371">
    <property type="protein sequence ID" value="CAC69670.1"/>
    <property type="molecule type" value="Genomic_DNA"/>
</dbReference>
<dbReference type="EMBL" id="CU329670">
    <property type="protein sequence ID" value="CAC00551.1"/>
    <property type="molecule type" value="Genomic_DNA"/>
</dbReference>
<dbReference type="EMBL" id="AB027891">
    <property type="protein sequence ID" value="BAA87195.1"/>
    <property type="molecule type" value="Genomic_DNA"/>
</dbReference>
<dbReference type="RefSeq" id="NP_594766.1">
    <property type="nucleotide sequence ID" value="NM_001020193.2"/>
</dbReference>
<dbReference type="SMR" id="Q9P377"/>
<dbReference type="BioGRID" id="279046">
    <property type="interactions" value="1"/>
</dbReference>
<dbReference type="FunCoup" id="Q9P377">
    <property type="interactions" value="157"/>
</dbReference>
<dbReference type="STRING" id="284812.Q9P377"/>
<dbReference type="CAZy" id="GT48">
    <property type="family name" value="Glycosyltransferase Family 48"/>
</dbReference>
<dbReference type="iPTMnet" id="Q9P377"/>
<dbReference type="PaxDb" id="4896-SPAC19B12.03.1"/>
<dbReference type="EnsemblFungi" id="SPAC19B12.03.1">
    <property type="protein sequence ID" value="SPAC19B12.03.1:pep"/>
    <property type="gene ID" value="SPAC19B12.03"/>
</dbReference>
<dbReference type="GeneID" id="2542591"/>
<dbReference type="KEGG" id="spo:2542591"/>
<dbReference type="PomBase" id="SPAC19B12.03">
    <property type="gene designation" value="bgs3"/>
</dbReference>
<dbReference type="VEuPathDB" id="FungiDB:SPAC19B12.03"/>
<dbReference type="eggNOG" id="KOG0916">
    <property type="taxonomic scope" value="Eukaryota"/>
</dbReference>
<dbReference type="HOGENOM" id="CLU_000844_0_1_1"/>
<dbReference type="InParanoid" id="Q9P377"/>
<dbReference type="OMA" id="FTFEALW"/>
<dbReference type="PhylomeDB" id="Q9P377"/>
<dbReference type="PRO" id="PR:Q9P377"/>
<dbReference type="Proteomes" id="UP000002485">
    <property type="component" value="Chromosome I"/>
</dbReference>
<dbReference type="GO" id="GO:0000148">
    <property type="term" value="C:1,3-beta-D-glucan synthase complex"/>
    <property type="evidence" value="ECO:0000305"/>
    <property type="project" value="PomBase"/>
</dbReference>
<dbReference type="GO" id="GO:0032153">
    <property type="term" value="C:cell division site"/>
    <property type="evidence" value="ECO:0000314"/>
    <property type="project" value="PomBase"/>
</dbReference>
<dbReference type="GO" id="GO:0051286">
    <property type="term" value="C:cell tip"/>
    <property type="evidence" value="ECO:0000314"/>
    <property type="project" value="PomBase"/>
</dbReference>
<dbReference type="GO" id="GO:0005737">
    <property type="term" value="C:cytoplasm"/>
    <property type="evidence" value="ECO:0007005"/>
    <property type="project" value="PomBase"/>
</dbReference>
<dbReference type="GO" id="GO:0009277">
    <property type="term" value="C:fungal-type cell wall"/>
    <property type="evidence" value="ECO:0000303"/>
    <property type="project" value="PomBase"/>
</dbReference>
<dbReference type="GO" id="GO:0005886">
    <property type="term" value="C:plasma membrane"/>
    <property type="evidence" value="ECO:0000318"/>
    <property type="project" value="GO_Central"/>
</dbReference>
<dbReference type="GO" id="GO:0030427">
    <property type="term" value="C:site of polarized growth"/>
    <property type="evidence" value="ECO:0000314"/>
    <property type="project" value="PomBase"/>
</dbReference>
<dbReference type="GO" id="GO:0003843">
    <property type="term" value="F:1,3-beta-D-glucan synthase activity"/>
    <property type="evidence" value="ECO:0000318"/>
    <property type="project" value="GO_Central"/>
</dbReference>
<dbReference type="GO" id="GO:0006075">
    <property type="term" value="P:(1-&gt;3)-beta-D-glucan biosynthetic process"/>
    <property type="evidence" value="ECO:0000318"/>
    <property type="project" value="GO_Central"/>
</dbReference>
<dbReference type="GO" id="GO:0051274">
    <property type="term" value="P:beta-glucan biosynthetic process"/>
    <property type="evidence" value="ECO:0000315"/>
    <property type="project" value="PomBase"/>
</dbReference>
<dbReference type="GO" id="GO:0071970">
    <property type="term" value="P:fungal-type cell wall (1-&gt;3)-beta-D-glucan biosynthetic process"/>
    <property type="evidence" value="ECO:0000304"/>
    <property type="project" value="PomBase"/>
</dbReference>
<dbReference type="GO" id="GO:0009272">
    <property type="term" value="P:fungal-type cell wall biogenesis"/>
    <property type="evidence" value="ECO:0000315"/>
    <property type="project" value="PomBase"/>
</dbReference>
<dbReference type="GO" id="GO:0051278">
    <property type="term" value="P:fungal-type cell wall polysaccharide biosynthetic process"/>
    <property type="evidence" value="ECO:0000318"/>
    <property type="project" value="GO_Central"/>
</dbReference>
<dbReference type="InterPro" id="IPR026899">
    <property type="entry name" value="FKS1-like_dom1"/>
</dbReference>
<dbReference type="InterPro" id="IPR056261">
    <property type="entry name" value="FKS1-like_dom2"/>
</dbReference>
<dbReference type="InterPro" id="IPR003440">
    <property type="entry name" value="Glyco_trans_48_dom"/>
</dbReference>
<dbReference type="PANTHER" id="PTHR12741:SF100">
    <property type="entry name" value="1,3-BETA-GLUCAN SYNTHASE COMPONENT BGS3"/>
    <property type="match status" value="1"/>
</dbReference>
<dbReference type="PANTHER" id="PTHR12741">
    <property type="entry name" value="LYST-INTERACTING PROTEIN LIP5 DOPAMINE RESPONSIVE PROTEIN DRG-1"/>
    <property type="match status" value="1"/>
</dbReference>
<dbReference type="Pfam" id="PF14288">
    <property type="entry name" value="FKS1_dom1"/>
    <property type="match status" value="1"/>
</dbReference>
<dbReference type="Pfam" id="PF23605">
    <property type="entry name" value="FKS1_dom2"/>
    <property type="match status" value="1"/>
</dbReference>
<dbReference type="Pfam" id="PF02364">
    <property type="entry name" value="Glucan_synthase"/>
    <property type="match status" value="1"/>
</dbReference>
<dbReference type="SMART" id="SM01205">
    <property type="entry name" value="FKS1_dom1"/>
    <property type="match status" value="1"/>
</dbReference>